<feature type="chain" id="PRO_0000014490" description="Probable translation initiation factor IF-2, 1st part" evidence="2">
    <location>
        <begin position="1"/>
        <end position="19"/>
    </location>
</feature>
<feature type="chain" id="PRO_0000014491" description="Pfu infB intein" evidence="2">
    <location>
        <begin position="20"/>
        <end position="406"/>
    </location>
</feature>
<feature type="chain" id="PRO_0000014492" description="Probable translation initiation factor IF-2, 2nd part" evidence="2">
    <location>
        <begin position="407"/>
        <end position="984"/>
    </location>
</feature>
<feature type="domain" description="DOD-type homing endonuclease">
    <location>
        <begin position="94"/>
        <end position="215"/>
    </location>
</feature>
<feature type="domain" description="tr-type G">
    <location>
        <begin position="391"/>
        <end position="608"/>
    </location>
</feature>
<feature type="binding site" evidence="1">
    <location>
        <begin position="464"/>
        <end position="468"/>
    </location>
    <ligand>
        <name>GTP</name>
        <dbReference type="ChEBI" id="CHEBI:37565"/>
    </ligand>
</feature>
<feature type="binding site" evidence="1">
    <location>
        <begin position="518"/>
        <end position="521"/>
    </location>
    <ligand>
        <name>GTP</name>
        <dbReference type="ChEBI" id="CHEBI:37565"/>
    </ligand>
</feature>
<name>IF2P_PYRFU</name>
<organism>
    <name type="scientific">Pyrococcus furiosus (strain ATCC 43587 / DSM 3638 / JCM 8422 / Vc1)</name>
    <dbReference type="NCBI Taxonomy" id="186497"/>
    <lineage>
        <taxon>Archaea</taxon>
        <taxon>Methanobacteriati</taxon>
        <taxon>Methanobacteriota</taxon>
        <taxon>Thermococci</taxon>
        <taxon>Thermococcales</taxon>
        <taxon>Thermococcaceae</taxon>
        <taxon>Pyrococcus</taxon>
    </lineage>
</organism>
<reference key="1">
    <citation type="journal article" date="1999" name="Genetics">
        <title>Divergence of the hyperthermophilic archaea Pyrococcus furiosus and P. horikoshii inferred from complete genomic sequences.</title>
        <authorList>
            <person name="Maeder D.L."/>
            <person name="Weiss R.B."/>
            <person name="Dunn D.M."/>
            <person name="Cherry J.L."/>
            <person name="Gonzalez J.M."/>
            <person name="DiRuggiero J."/>
            <person name="Robb F.T."/>
        </authorList>
    </citation>
    <scope>NUCLEOTIDE SEQUENCE [LARGE SCALE GENOMIC DNA]</scope>
    <source>
        <strain>ATCC 43587 / DSM 3638 / JCM 8422 / Vc1</strain>
    </source>
</reference>
<dbReference type="EMBL" id="AE009950">
    <property type="protein sequence ID" value="AAL81261.1"/>
    <property type="molecule type" value="Genomic_DNA"/>
</dbReference>
<dbReference type="RefSeq" id="WP_011012277.1">
    <property type="nucleotide sequence ID" value="NZ_CP023154.1"/>
</dbReference>
<dbReference type="SMR" id="Q8U1R8"/>
<dbReference type="STRING" id="186497.PF1137"/>
<dbReference type="MEROPS" id="N10.004"/>
<dbReference type="PaxDb" id="186497-PF1137"/>
<dbReference type="GeneID" id="41712946"/>
<dbReference type="KEGG" id="pfu:PF1137"/>
<dbReference type="PATRIC" id="fig|186497.12.peg.1198"/>
<dbReference type="eggNOG" id="arCOG01560">
    <property type="taxonomic scope" value="Archaea"/>
</dbReference>
<dbReference type="eggNOG" id="arCOG03151">
    <property type="taxonomic scope" value="Archaea"/>
</dbReference>
<dbReference type="HOGENOM" id="CLU_002656_3_4_2"/>
<dbReference type="OrthoDB" id="30957at2157"/>
<dbReference type="PhylomeDB" id="Q8U1R8"/>
<dbReference type="Proteomes" id="UP000001013">
    <property type="component" value="Chromosome"/>
</dbReference>
<dbReference type="GO" id="GO:0005737">
    <property type="term" value="C:cytoplasm"/>
    <property type="evidence" value="ECO:0007669"/>
    <property type="project" value="TreeGrafter"/>
</dbReference>
<dbReference type="GO" id="GO:0004519">
    <property type="term" value="F:endonuclease activity"/>
    <property type="evidence" value="ECO:0007669"/>
    <property type="project" value="UniProtKB-KW"/>
</dbReference>
<dbReference type="GO" id="GO:0005525">
    <property type="term" value="F:GTP binding"/>
    <property type="evidence" value="ECO:0007669"/>
    <property type="project" value="UniProtKB-KW"/>
</dbReference>
<dbReference type="GO" id="GO:0003924">
    <property type="term" value="F:GTPase activity"/>
    <property type="evidence" value="ECO:0007669"/>
    <property type="project" value="UniProtKB-UniRule"/>
</dbReference>
<dbReference type="GO" id="GO:0003743">
    <property type="term" value="F:translation initiation factor activity"/>
    <property type="evidence" value="ECO:0007669"/>
    <property type="project" value="UniProtKB-UniRule"/>
</dbReference>
<dbReference type="GO" id="GO:0016539">
    <property type="term" value="P:intein-mediated protein splicing"/>
    <property type="evidence" value="ECO:0007669"/>
    <property type="project" value="InterPro"/>
</dbReference>
<dbReference type="GO" id="GO:0006314">
    <property type="term" value="P:intron homing"/>
    <property type="evidence" value="ECO:0007669"/>
    <property type="project" value="UniProtKB-KW"/>
</dbReference>
<dbReference type="CDD" id="cd03703">
    <property type="entry name" value="aeIF5B_II"/>
    <property type="match status" value="1"/>
</dbReference>
<dbReference type="CDD" id="cd00081">
    <property type="entry name" value="Hint"/>
    <property type="match status" value="2"/>
</dbReference>
<dbReference type="CDD" id="cd16266">
    <property type="entry name" value="IF2_aeIF5B_IV"/>
    <property type="match status" value="1"/>
</dbReference>
<dbReference type="CDD" id="cd01887">
    <property type="entry name" value="IF2_eIF5B"/>
    <property type="match status" value="1"/>
</dbReference>
<dbReference type="FunFam" id="3.40.50.300:FF:000112">
    <property type="entry name" value="Eukaryotic translation initiation factor 5B"/>
    <property type="match status" value="1"/>
</dbReference>
<dbReference type="FunFam" id="2.40.30.10:FF:000013">
    <property type="entry name" value="eukaryotic translation initiation factor 5B"/>
    <property type="match status" value="1"/>
</dbReference>
<dbReference type="FunFam" id="3.40.50.10050:FF:000009">
    <property type="entry name" value="Probable translation initiation factor IF-2"/>
    <property type="match status" value="1"/>
</dbReference>
<dbReference type="Gene3D" id="2.170.16.10">
    <property type="entry name" value="Hedgehog/Intein (Hint) domain"/>
    <property type="match status" value="2"/>
</dbReference>
<dbReference type="Gene3D" id="3.10.28.10">
    <property type="entry name" value="Homing endonucleases"/>
    <property type="match status" value="1"/>
</dbReference>
<dbReference type="Gene3D" id="3.40.50.300">
    <property type="entry name" value="P-loop containing nucleotide triphosphate hydrolases"/>
    <property type="match status" value="1"/>
</dbReference>
<dbReference type="Gene3D" id="2.40.30.10">
    <property type="entry name" value="Translation factors"/>
    <property type="match status" value="2"/>
</dbReference>
<dbReference type="Gene3D" id="3.40.50.10050">
    <property type="entry name" value="Translation initiation factor IF- 2, domain 3"/>
    <property type="match status" value="1"/>
</dbReference>
<dbReference type="HAMAP" id="MF_00100_A">
    <property type="entry name" value="IF_2_A"/>
    <property type="match status" value="1"/>
</dbReference>
<dbReference type="InterPro" id="IPR004161">
    <property type="entry name" value="EFTu-like_2"/>
</dbReference>
<dbReference type="InterPro" id="IPR029459">
    <property type="entry name" value="EFTU-type"/>
</dbReference>
<dbReference type="InterPro" id="IPR003586">
    <property type="entry name" value="Hint_dom_C"/>
</dbReference>
<dbReference type="InterPro" id="IPR003587">
    <property type="entry name" value="Hint_dom_N"/>
</dbReference>
<dbReference type="InterPro" id="IPR036844">
    <property type="entry name" value="Hint_dom_sf"/>
</dbReference>
<dbReference type="InterPro" id="IPR027434">
    <property type="entry name" value="Homing_endonucl"/>
</dbReference>
<dbReference type="InterPro" id="IPR006142">
    <property type="entry name" value="INTEIN"/>
</dbReference>
<dbReference type="InterPro" id="IPR030934">
    <property type="entry name" value="Intein_C"/>
</dbReference>
<dbReference type="InterPro" id="IPR004042">
    <property type="entry name" value="Intein_endonuc_central"/>
</dbReference>
<dbReference type="InterPro" id="IPR006141">
    <property type="entry name" value="Intein_N"/>
</dbReference>
<dbReference type="InterPro" id="IPR004860">
    <property type="entry name" value="LAGLIDADG_dom"/>
</dbReference>
<dbReference type="InterPro" id="IPR027417">
    <property type="entry name" value="P-loop_NTPase"/>
</dbReference>
<dbReference type="InterPro" id="IPR005225">
    <property type="entry name" value="Small_GTP-bd"/>
</dbReference>
<dbReference type="InterPro" id="IPR000795">
    <property type="entry name" value="T_Tr_GTP-bd_dom"/>
</dbReference>
<dbReference type="InterPro" id="IPR004544">
    <property type="entry name" value="TF_aIF-2_arc"/>
</dbReference>
<dbReference type="InterPro" id="IPR015760">
    <property type="entry name" value="TIF_IF2"/>
</dbReference>
<dbReference type="InterPro" id="IPR023115">
    <property type="entry name" value="TIF_IF2_dom3"/>
</dbReference>
<dbReference type="InterPro" id="IPR036925">
    <property type="entry name" value="TIF_IF2_dom3_sf"/>
</dbReference>
<dbReference type="InterPro" id="IPR009000">
    <property type="entry name" value="Transl_B-barrel_sf"/>
</dbReference>
<dbReference type="NCBIfam" id="TIGR00491">
    <property type="entry name" value="aIF-2"/>
    <property type="match status" value="1"/>
</dbReference>
<dbReference type="NCBIfam" id="TIGR01443">
    <property type="entry name" value="intein_Cterm"/>
    <property type="match status" value="1"/>
</dbReference>
<dbReference type="NCBIfam" id="TIGR01445">
    <property type="entry name" value="intein_Nterm"/>
    <property type="match status" value="1"/>
</dbReference>
<dbReference type="NCBIfam" id="NF003078">
    <property type="entry name" value="PRK04004.1"/>
    <property type="match status" value="1"/>
</dbReference>
<dbReference type="NCBIfam" id="NF011418">
    <property type="entry name" value="PRK14845.1"/>
    <property type="match status" value="1"/>
</dbReference>
<dbReference type="NCBIfam" id="TIGR00231">
    <property type="entry name" value="small_GTP"/>
    <property type="match status" value="1"/>
</dbReference>
<dbReference type="PANTHER" id="PTHR43381:SF4">
    <property type="entry name" value="EUKARYOTIC TRANSLATION INITIATION FACTOR 5B"/>
    <property type="match status" value="1"/>
</dbReference>
<dbReference type="PANTHER" id="PTHR43381">
    <property type="entry name" value="TRANSLATION INITIATION FACTOR IF-2-RELATED"/>
    <property type="match status" value="1"/>
</dbReference>
<dbReference type="Pfam" id="PF00009">
    <property type="entry name" value="GTP_EFTU"/>
    <property type="match status" value="1"/>
</dbReference>
<dbReference type="Pfam" id="PF03144">
    <property type="entry name" value="GTP_EFTU_D2"/>
    <property type="match status" value="1"/>
</dbReference>
<dbReference type="Pfam" id="PF14578">
    <property type="entry name" value="GTP_EFTU_D4"/>
    <property type="match status" value="1"/>
</dbReference>
<dbReference type="Pfam" id="PF11987">
    <property type="entry name" value="IF-2"/>
    <property type="match status" value="1"/>
</dbReference>
<dbReference type="Pfam" id="PF14890">
    <property type="entry name" value="Intein_splicing"/>
    <property type="match status" value="1"/>
</dbReference>
<dbReference type="Pfam" id="PF14528">
    <property type="entry name" value="LAGLIDADG_3"/>
    <property type="match status" value="1"/>
</dbReference>
<dbReference type="PRINTS" id="PR00379">
    <property type="entry name" value="INTEIN"/>
</dbReference>
<dbReference type="SMART" id="SM00305">
    <property type="entry name" value="HintC"/>
    <property type="match status" value="1"/>
</dbReference>
<dbReference type="SMART" id="SM00306">
    <property type="entry name" value="HintN"/>
    <property type="match status" value="1"/>
</dbReference>
<dbReference type="SUPFAM" id="SSF51294">
    <property type="entry name" value="Hedgehog/intein (Hint) domain"/>
    <property type="match status" value="1"/>
</dbReference>
<dbReference type="SUPFAM" id="SSF55608">
    <property type="entry name" value="Homing endonucleases"/>
    <property type="match status" value="1"/>
</dbReference>
<dbReference type="SUPFAM" id="SSF52156">
    <property type="entry name" value="Initiation factor IF2/eIF5b, domain 3"/>
    <property type="match status" value="1"/>
</dbReference>
<dbReference type="SUPFAM" id="SSF52540">
    <property type="entry name" value="P-loop containing nucleoside triphosphate hydrolases"/>
    <property type="match status" value="1"/>
</dbReference>
<dbReference type="SUPFAM" id="SSF50447">
    <property type="entry name" value="Translation proteins"/>
    <property type="match status" value="1"/>
</dbReference>
<dbReference type="PROSITE" id="PS51722">
    <property type="entry name" value="G_TR_2"/>
    <property type="match status" value="1"/>
</dbReference>
<dbReference type="PROSITE" id="PS50818">
    <property type="entry name" value="INTEIN_C_TER"/>
    <property type="match status" value="1"/>
</dbReference>
<dbReference type="PROSITE" id="PS50819">
    <property type="entry name" value="INTEIN_ENDONUCLEASE"/>
    <property type="match status" value="1"/>
</dbReference>
<dbReference type="PROSITE" id="PS50817">
    <property type="entry name" value="INTEIN_N_TER"/>
    <property type="match status" value="1"/>
</dbReference>
<evidence type="ECO:0000250" key="1"/>
<evidence type="ECO:0000255" key="2"/>
<evidence type="ECO:0000305" key="3"/>
<protein>
    <recommendedName>
        <fullName>Probable translation initiation factor IF-2</fullName>
    </recommendedName>
    <component>
        <recommendedName>
            <fullName>Pfu infB intein</fullName>
        </recommendedName>
        <alternativeName>
            <fullName>Pfu IF2 intein</fullName>
        </alternativeName>
    </component>
</protein>
<gene>
    <name type="primary">infB</name>
    <name type="ordered locus">PF1137</name>
</gene>
<proteinExistence type="inferred from homology"/>
<comment type="function">
    <text evidence="1">Function in general translation initiation by promoting the binding of the formylmethionine-tRNA to ribosomes. Seems to function along with eIF-2 (By similarity).</text>
</comment>
<comment type="PTM">
    <text evidence="3">This protein undergoes a protein self splicing that involves a post-translational excision of the intervening region (intein) followed by peptide ligation.</text>
</comment>
<comment type="miscellaneous">
    <text>The intein interrupts the GTP-binding site.</text>
</comment>
<comment type="similarity">
    <text evidence="3">Belongs to the TRAFAC class translation factor GTPase superfamily. Classic translation factor GTPase family. IF-2 subfamily.</text>
</comment>
<keyword id="KW-0068">Autocatalytic cleavage</keyword>
<keyword id="KW-0255">Endonuclease</keyword>
<keyword id="KW-0342">GTP-binding</keyword>
<keyword id="KW-0378">Hydrolase</keyword>
<keyword id="KW-0396">Initiation factor</keyword>
<keyword id="KW-0404">Intron homing</keyword>
<keyword id="KW-0540">Nuclease</keyword>
<keyword id="KW-0547">Nucleotide-binding</keyword>
<keyword id="KW-0648">Protein biosynthesis</keyword>
<keyword id="KW-0651">Protein splicing</keyword>
<keyword id="KW-1185">Reference proteome</keyword>
<accession>Q8U1R8</accession>
<sequence>MKKIRQPIIAVLGHVDHGKCLLPEEKVVLPEIGLVTLRELFELANEVVVKDEEKEVRKLGKMLTGVDERGNVKLLNALYVWRVAHKGEMIRVKVNGWYSVTVTPEHPFLTNRGWVKAGELKEGDYIAIPRRVYGNEDLMKFSKIAKELGIKGDEKEFYLAGASLDIPIKVLFLAPSKLVSAFLRGYFDAKGVVRENYIEVPLFEDLPLLLLRFGIVSRIEKSTLKISGKRNLELFRKHVGFTDSEKAKALDELISKAKESERYPILEELRRLGLLFGFTRNELRIEENPTYEVLMEILERIERGSPNLAEKIAVLEGRIKEENYLRILEEEGLIENGKLTELGKELLEVWRNREFDSKDVDYVRNIVENLVFLPVEKVERIEYEGYVYDVTTETHNFVANGILVHNTTLLDRIRKTNVAAKEAGGITQHIGATEVPIDVVKEIAGPLIKLWKAEIKLPGLLFIDTPGHEAFTSLRARGGSLADLAVLVVDINEGFQPQTIESIEILRRYKTPFVVAANKIDRIKGWVIQEDEPFLLNSKRQDQRAIQELETKLWELIGKFYEFGFQANRFDRVQNFTRELAIVPISAKYGIGIAELLVLIAGLSQKYLEERLKIEVEGPARGTILEVREEPGLGHTIDVIIYEGTLHKDDTIVVGGKDKAIVTKVRALLKPKPLDEIRDPRFRFDYVDEVTAAAGVKIAAPGLEEALAGSPVIAAPTPEAVEKAKEEIMRQIQSVVISTDKMGVIIKADTLGSLEALSKELQEKGIPIRKADVGNISKTDVMEALSVREEDPKYGVIIGFNVKVNEDAQEIAKAKGVPIFVGNIIYKLIEDYEAWVKEEEEKKKRELLAKVTFPGVIRLYPDERYVFRRSNPAIVGIEVIEGRIKPGVTLIKQNGQKVGTIKSIKSRDEFLQEAKKGQAVAVAIEGAIVGRHIHPGETLYVDISRDDAITLLKYLRDVLEDSDIKALKIIAQIKAKEDPFWRAI</sequence>